<protein>
    <recommendedName>
        <fullName>Peptidyl-prolyl cis-trans isomerase</fullName>
        <shortName>PPIase</shortName>
        <ecNumber>5.2.1.8</ecNumber>
    </recommendedName>
    <alternativeName>
        <fullName>Cyclophilin</fullName>
    </alternativeName>
    <alternativeName>
        <fullName>Cyclosporin A-binding protein</fullName>
    </alternativeName>
    <alternativeName>
        <fullName>Rotamase</fullName>
    </alternativeName>
</protein>
<organism>
    <name type="scientific">Blattella germanica</name>
    <name type="common">German cockroach</name>
    <name type="synonym">Blatta germanica</name>
    <dbReference type="NCBI Taxonomy" id="6973"/>
    <lineage>
        <taxon>Eukaryota</taxon>
        <taxon>Metazoa</taxon>
        <taxon>Ecdysozoa</taxon>
        <taxon>Arthropoda</taxon>
        <taxon>Hexapoda</taxon>
        <taxon>Insecta</taxon>
        <taxon>Pterygota</taxon>
        <taxon>Neoptera</taxon>
        <taxon>Polyneoptera</taxon>
        <taxon>Dictyoptera</taxon>
        <taxon>Blattodea</taxon>
        <taxon>Blaberoidea</taxon>
        <taxon>Blattellidae</taxon>
        <taxon>Blattella</taxon>
    </lineage>
</organism>
<accession>P54985</accession>
<gene>
    <name type="primary">CYPA</name>
</gene>
<comment type="function">
    <text>PPIases accelerate the folding of proteins. It catalyzes the cis-trans isomerization of proline imidic peptide bonds in oligopeptides.</text>
</comment>
<comment type="catalytic activity">
    <reaction>
        <text>[protein]-peptidylproline (omega=180) = [protein]-peptidylproline (omega=0)</text>
        <dbReference type="Rhea" id="RHEA:16237"/>
        <dbReference type="Rhea" id="RHEA-COMP:10747"/>
        <dbReference type="Rhea" id="RHEA-COMP:10748"/>
        <dbReference type="ChEBI" id="CHEBI:83833"/>
        <dbReference type="ChEBI" id="CHEBI:83834"/>
        <dbReference type="EC" id="5.2.1.8"/>
    </reaction>
</comment>
<comment type="activity regulation">
    <text>Binds cyclosporin A (CsA). CsA mediates some of its effects via an inhibitory action on PPIase.</text>
</comment>
<comment type="subcellular location">
    <subcellularLocation>
        <location>Cytoplasm</location>
    </subcellularLocation>
</comment>
<comment type="tissue specificity">
    <text>Ubiquitous.</text>
</comment>
<comment type="similarity">
    <text evidence="2">Belongs to the cyclophilin-type PPIase family. PPIase A subfamily.</text>
</comment>
<dbReference type="EC" id="5.2.1.8"/>
<dbReference type="EMBL" id="X87418">
    <property type="protein sequence ID" value="CAA60869.1"/>
    <property type="molecule type" value="mRNA"/>
</dbReference>
<dbReference type="PIR" id="S63995">
    <property type="entry name" value="S63995"/>
</dbReference>
<dbReference type="SMR" id="P54985"/>
<dbReference type="OrthoDB" id="193499at2759"/>
<dbReference type="GO" id="GO:0005737">
    <property type="term" value="C:cytoplasm"/>
    <property type="evidence" value="ECO:0007669"/>
    <property type="project" value="UniProtKB-SubCell"/>
</dbReference>
<dbReference type="GO" id="GO:0016018">
    <property type="term" value="F:cyclosporin A binding"/>
    <property type="evidence" value="ECO:0007669"/>
    <property type="project" value="TreeGrafter"/>
</dbReference>
<dbReference type="GO" id="GO:0003755">
    <property type="term" value="F:peptidyl-prolyl cis-trans isomerase activity"/>
    <property type="evidence" value="ECO:0007669"/>
    <property type="project" value="UniProtKB-KW"/>
</dbReference>
<dbReference type="GO" id="GO:0006457">
    <property type="term" value="P:protein folding"/>
    <property type="evidence" value="ECO:0007669"/>
    <property type="project" value="InterPro"/>
</dbReference>
<dbReference type="CDD" id="cd01926">
    <property type="entry name" value="cyclophilin_ABH_like"/>
    <property type="match status" value="1"/>
</dbReference>
<dbReference type="FunFam" id="2.40.100.10:FF:000013">
    <property type="entry name" value="Peptidyl-prolyl cis-trans isomerase"/>
    <property type="match status" value="1"/>
</dbReference>
<dbReference type="Gene3D" id="2.40.100.10">
    <property type="entry name" value="Cyclophilin-like"/>
    <property type="match status" value="1"/>
</dbReference>
<dbReference type="InterPro" id="IPR029000">
    <property type="entry name" value="Cyclophilin-like_dom_sf"/>
</dbReference>
<dbReference type="InterPro" id="IPR024936">
    <property type="entry name" value="Cyclophilin-type_PPIase"/>
</dbReference>
<dbReference type="InterPro" id="IPR020892">
    <property type="entry name" value="Cyclophilin-type_PPIase_CS"/>
</dbReference>
<dbReference type="InterPro" id="IPR002130">
    <property type="entry name" value="Cyclophilin-type_PPIase_dom"/>
</dbReference>
<dbReference type="PANTHER" id="PTHR11071">
    <property type="entry name" value="PEPTIDYL-PROLYL CIS-TRANS ISOMERASE"/>
    <property type="match status" value="1"/>
</dbReference>
<dbReference type="PANTHER" id="PTHR11071:SF561">
    <property type="entry name" value="PEPTIDYL-PROLYL CIS-TRANS ISOMERASE D-RELATED"/>
    <property type="match status" value="1"/>
</dbReference>
<dbReference type="Pfam" id="PF00160">
    <property type="entry name" value="Pro_isomerase"/>
    <property type="match status" value="1"/>
</dbReference>
<dbReference type="PIRSF" id="PIRSF001467">
    <property type="entry name" value="Peptidylpro_ismrse"/>
    <property type="match status" value="1"/>
</dbReference>
<dbReference type="PRINTS" id="PR00153">
    <property type="entry name" value="CSAPPISMRASE"/>
</dbReference>
<dbReference type="SUPFAM" id="SSF50891">
    <property type="entry name" value="Cyclophilin-like"/>
    <property type="match status" value="1"/>
</dbReference>
<dbReference type="PROSITE" id="PS00170">
    <property type="entry name" value="CSA_PPIASE_1"/>
    <property type="match status" value="1"/>
</dbReference>
<dbReference type="PROSITE" id="PS50072">
    <property type="entry name" value="CSA_PPIASE_2"/>
    <property type="match status" value="1"/>
</dbReference>
<sequence length="164" mass="17935">MAHPRVFFDMSADGQPVGRIVMELRSDVVPKTAENFRALCTGEKGFGYKGSRFHRVIPNFMCQGGDFTNHNGTGGKSIYGTKFEDENFQLKHTGPGILWMANAGPNTNGSQFFITTAKTSWLDNRHVVFGSVVEGMDVVKKLESLGSQSGKTNKKIAVVDCGQI</sequence>
<feature type="chain" id="PRO_0000064122" description="Peptidyl-prolyl cis-trans isomerase">
    <location>
        <begin position="1"/>
        <end position="164"/>
    </location>
</feature>
<feature type="domain" description="PPIase cyclophilin-type" evidence="1">
    <location>
        <begin position="7"/>
        <end position="163"/>
    </location>
</feature>
<keyword id="KW-0963">Cytoplasm</keyword>
<keyword id="KW-0413">Isomerase</keyword>
<keyword id="KW-0697">Rotamase</keyword>
<evidence type="ECO:0000255" key="1">
    <source>
        <dbReference type="PROSITE-ProRule" id="PRU00156"/>
    </source>
</evidence>
<evidence type="ECO:0000305" key="2"/>
<reference key="1">
    <citation type="journal article" date="1995" name="Eur. J. Biochem.">
        <title>Characterization of a cDNA encoding a cytosolic peptidylprolyl cis-trans-isomerase from Blattella germanica.</title>
        <authorList>
            <person name="Martinez-Gonzalez J."/>
            <person name="Hegardt F.G."/>
        </authorList>
    </citation>
    <scope>NUCLEOTIDE SEQUENCE [MRNA]</scope>
</reference>
<proteinExistence type="evidence at transcript level"/>
<name>PPIA_BLAGE</name>